<name>PURT_SALPB</name>
<reference key="1">
    <citation type="submission" date="2007-11" db="EMBL/GenBank/DDBJ databases">
        <authorList>
            <consortium name="The Salmonella enterica serovar Paratyphi B Genome Sequencing Project"/>
            <person name="McClelland M."/>
            <person name="Sanderson E.K."/>
            <person name="Porwollik S."/>
            <person name="Spieth J."/>
            <person name="Clifton W.S."/>
            <person name="Fulton R."/>
            <person name="Cordes M."/>
            <person name="Wollam A."/>
            <person name="Shah N."/>
            <person name="Pepin K."/>
            <person name="Bhonagiri V."/>
            <person name="Nash W."/>
            <person name="Johnson M."/>
            <person name="Thiruvilangam P."/>
            <person name="Wilson R."/>
        </authorList>
    </citation>
    <scope>NUCLEOTIDE SEQUENCE [LARGE SCALE GENOMIC DNA]</scope>
    <source>
        <strain>ATCC BAA-1250 / SPB7</strain>
    </source>
</reference>
<feature type="chain" id="PRO_1000186893" description="Formate-dependent phosphoribosylglycinamide formyltransferase">
    <location>
        <begin position="1"/>
        <end position="392"/>
    </location>
</feature>
<feature type="domain" description="ATP-grasp" evidence="1">
    <location>
        <begin position="119"/>
        <end position="308"/>
    </location>
</feature>
<feature type="binding site" evidence="1">
    <location>
        <begin position="22"/>
        <end position="23"/>
    </location>
    <ligand>
        <name>N(1)-(5-phospho-beta-D-ribosyl)glycinamide</name>
        <dbReference type="ChEBI" id="CHEBI:143788"/>
    </ligand>
</feature>
<feature type="binding site" evidence="1">
    <location>
        <position position="82"/>
    </location>
    <ligand>
        <name>N(1)-(5-phospho-beta-D-ribosyl)glycinamide</name>
        <dbReference type="ChEBI" id="CHEBI:143788"/>
    </ligand>
</feature>
<feature type="binding site" evidence="1">
    <location>
        <position position="114"/>
    </location>
    <ligand>
        <name>ATP</name>
        <dbReference type="ChEBI" id="CHEBI:30616"/>
    </ligand>
</feature>
<feature type="binding site" evidence="1">
    <location>
        <position position="155"/>
    </location>
    <ligand>
        <name>ATP</name>
        <dbReference type="ChEBI" id="CHEBI:30616"/>
    </ligand>
</feature>
<feature type="binding site" evidence="1">
    <location>
        <begin position="160"/>
        <end position="165"/>
    </location>
    <ligand>
        <name>ATP</name>
        <dbReference type="ChEBI" id="CHEBI:30616"/>
    </ligand>
</feature>
<feature type="binding site" evidence="1">
    <location>
        <begin position="195"/>
        <end position="198"/>
    </location>
    <ligand>
        <name>ATP</name>
        <dbReference type="ChEBI" id="CHEBI:30616"/>
    </ligand>
</feature>
<feature type="binding site" evidence="1">
    <location>
        <position position="203"/>
    </location>
    <ligand>
        <name>ATP</name>
        <dbReference type="ChEBI" id="CHEBI:30616"/>
    </ligand>
</feature>
<feature type="binding site" evidence="1">
    <location>
        <position position="267"/>
    </location>
    <ligand>
        <name>Mg(2+)</name>
        <dbReference type="ChEBI" id="CHEBI:18420"/>
    </ligand>
</feature>
<feature type="binding site" evidence="1">
    <location>
        <position position="279"/>
    </location>
    <ligand>
        <name>Mg(2+)</name>
        <dbReference type="ChEBI" id="CHEBI:18420"/>
    </ligand>
</feature>
<feature type="binding site" evidence="1">
    <location>
        <position position="286"/>
    </location>
    <ligand>
        <name>N(1)-(5-phospho-beta-D-ribosyl)glycinamide</name>
        <dbReference type="ChEBI" id="CHEBI:143788"/>
    </ligand>
</feature>
<feature type="binding site" evidence="1">
    <location>
        <position position="355"/>
    </location>
    <ligand>
        <name>N(1)-(5-phospho-beta-D-ribosyl)glycinamide</name>
        <dbReference type="ChEBI" id="CHEBI:143788"/>
    </ligand>
</feature>
<feature type="binding site" evidence="1">
    <location>
        <begin position="362"/>
        <end position="363"/>
    </location>
    <ligand>
        <name>N(1)-(5-phospho-beta-D-ribosyl)glycinamide</name>
        <dbReference type="ChEBI" id="CHEBI:143788"/>
    </ligand>
</feature>
<protein>
    <recommendedName>
        <fullName evidence="1">Formate-dependent phosphoribosylglycinamide formyltransferase</fullName>
        <ecNumber evidence="1">6.3.1.21</ecNumber>
    </recommendedName>
    <alternativeName>
        <fullName evidence="1">5'-phosphoribosylglycinamide transformylase 2</fullName>
    </alternativeName>
    <alternativeName>
        <fullName evidence="1">Formate-dependent GAR transformylase</fullName>
    </alternativeName>
    <alternativeName>
        <fullName evidence="1">GAR transformylase 2</fullName>
        <shortName evidence="1">GART 2</shortName>
    </alternativeName>
    <alternativeName>
        <fullName evidence="1">Non-folate glycinamide ribonucleotide transformylase</fullName>
    </alternativeName>
    <alternativeName>
        <fullName evidence="1">Phosphoribosylglycinamide formyltransferase 2</fullName>
    </alternativeName>
</protein>
<gene>
    <name evidence="1" type="primary">purT</name>
    <name type="ordered locus">SPAB_01286</name>
</gene>
<sequence length="392" mass="42118">MTLLGTALRPAATRVMLLGAGELGKEVAIECQRLGIEVIAVDRYPDAPAMHVAHRSHVINMLDGEALRHVITEEKPHYIVPEIEAIATDTLRELEGEGLNVVPCARATQLTMNREGIRRLAAEELGLPTSTYRFADSEASFHDAVAAVGFPCIVKPVMSSSGKGQSFIHSAEQLAQAWEYAQQGGRAGAGRVIVEGVVKFDFEITLLTVSAVDGVHFCAPVGHRQQDGDYRESWQPQQMSELALKRAQEIARHVVLALGGHGLFGVELFVCGDEVIFSEVSPRPHDTGMVTLISQDLSEFALHVRAFLGMPVGAIRQYGPAASAVILPQLTSQNVTFDNVHAAVGAGVQVRLFGKPEIDGSRRLGVALATGENVEEAVIRAKKAASRVTVKG</sequence>
<keyword id="KW-0067">ATP-binding</keyword>
<keyword id="KW-0436">Ligase</keyword>
<keyword id="KW-0460">Magnesium</keyword>
<keyword id="KW-0479">Metal-binding</keyword>
<keyword id="KW-0547">Nucleotide-binding</keyword>
<keyword id="KW-0658">Purine biosynthesis</keyword>
<dbReference type="EC" id="6.3.1.21" evidence="1"/>
<dbReference type="EMBL" id="CP000886">
    <property type="protein sequence ID" value="ABX66698.1"/>
    <property type="molecule type" value="Genomic_DNA"/>
</dbReference>
<dbReference type="RefSeq" id="WP_000173424.1">
    <property type="nucleotide sequence ID" value="NC_010102.1"/>
</dbReference>
<dbReference type="SMR" id="A9MUY8"/>
<dbReference type="KEGG" id="spq:SPAB_01286"/>
<dbReference type="PATRIC" id="fig|1016998.12.peg.1213"/>
<dbReference type="HOGENOM" id="CLU_011534_1_3_6"/>
<dbReference type="BioCyc" id="SENT1016998:SPAB_RS05335-MONOMER"/>
<dbReference type="UniPathway" id="UPA00074">
    <property type="reaction ID" value="UER00127"/>
</dbReference>
<dbReference type="Proteomes" id="UP000008556">
    <property type="component" value="Chromosome"/>
</dbReference>
<dbReference type="GO" id="GO:0005829">
    <property type="term" value="C:cytosol"/>
    <property type="evidence" value="ECO:0007669"/>
    <property type="project" value="TreeGrafter"/>
</dbReference>
<dbReference type="GO" id="GO:0005524">
    <property type="term" value="F:ATP binding"/>
    <property type="evidence" value="ECO:0007669"/>
    <property type="project" value="UniProtKB-UniRule"/>
</dbReference>
<dbReference type="GO" id="GO:0000287">
    <property type="term" value="F:magnesium ion binding"/>
    <property type="evidence" value="ECO:0007669"/>
    <property type="project" value="InterPro"/>
</dbReference>
<dbReference type="GO" id="GO:0043815">
    <property type="term" value="F:phosphoribosylglycinamide formyltransferase 2 activity"/>
    <property type="evidence" value="ECO:0007669"/>
    <property type="project" value="UniProtKB-UniRule"/>
</dbReference>
<dbReference type="GO" id="GO:0004644">
    <property type="term" value="F:phosphoribosylglycinamide formyltransferase activity"/>
    <property type="evidence" value="ECO:0007669"/>
    <property type="project" value="InterPro"/>
</dbReference>
<dbReference type="GO" id="GO:0006189">
    <property type="term" value="P:'de novo' IMP biosynthetic process"/>
    <property type="evidence" value="ECO:0007669"/>
    <property type="project" value="UniProtKB-UniRule"/>
</dbReference>
<dbReference type="FunFam" id="3.30.1490.20:FF:000013">
    <property type="entry name" value="Formate-dependent phosphoribosylglycinamide formyltransferase"/>
    <property type="match status" value="1"/>
</dbReference>
<dbReference type="FunFam" id="3.30.470.20:FF:000027">
    <property type="entry name" value="Formate-dependent phosphoribosylglycinamide formyltransferase"/>
    <property type="match status" value="1"/>
</dbReference>
<dbReference type="FunFam" id="3.40.50.20:FF:000007">
    <property type="entry name" value="Formate-dependent phosphoribosylglycinamide formyltransferase"/>
    <property type="match status" value="1"/>
</dbReference>
<dbReference type="Gene3D" id="3.40.50.20">
    <property type="match status" value="1"/>
</dbReference>
<dbReference type="Gene3D" id="3.30.1490.20">
    <property type="entry name" value="ATP-grasp fold, A domain"/>
    <property type="match status" value="1"/>
</dbReference>
<dbReference type="Gene3D" id="3.30.470.20">
    <property type="entry name" value="ATP-grasp fold, B domain"/>
    <property type="match status" value="1"/>
</dbReference>
<dbReference type="HAMAP" id="MF_01643">
    <property type="entry name" value="PurT"/>
    <property type="match status" value="1"/>
</dbReference>
<dbReference type="InterPro" id="IPR011761">
    <property type="entry name" value="ATP-grasp"/>
</dbReference>
<dbReference type="InterPro" id="IPR003135">
    <property type="entry name" value="ATP-grasp_carboxylate-amine"/>
</dbReference>
<dbReference type="InterPro" id="IPR013815">
    <property type="entry name" value="ATP_grasp_subdomain_1"/>
</dbReference>
<dbReference type="InterPro" id="IPR016185">
    <property type="entry name" value="PreATP-grasp_dom_sf"/>
</dbReference>
<dbReference type="InterPro" id="IPR005862">
    <property type="entry name" value="PurT"/>
</dbReference>
<dbReference type="InterPro" id="IPR054350">
    <property type="entry name" value="PurT/PurK_preATP-grasp"/>
</dbReference>
<dbReference type="InterPro" id="IPR048740">
    <property type="entry name" value="PurT_C"/>
</dbReference>
<dbReference type="InterPro" id="IPR011054">
    <property type="entry name" value="Rudment_hybrid_motif"/>
</dbReference>
<dbReference type="NCBIfam" id="NF006766">
    <property type="entry name" value="PRK09288.1"/>
    <property type="match status" value="1"/>
</dbReference>
<dbReference type="NCBIfam" id="TIGR01142">
    <property type="entry name" value="purT"/>
    <property type="match status" value="1"/>
</dbReference>
<dbReference type="PANTHER" id="PTHR43055">
    <property type="entry name" value="FORMATE-DEPENDENT PHOSPHORIBOSYLGLYCINAMIDE FORMYLTRANSFERASE"/>
    <property type="match status" value="1"/>
</dbReference>
<dbReference type="PANTHER" id="PTHR43055:SF1">
    <property type="entry name" value="FORMATE-DEPENDENT PHOSPHORIBOSYLGLYCINAMIDE FORMYLTRANSFERASE"/>
    <property type="match status" value="1"/>
</dbReference>
<dbReference type="Pfam" id="PF02222">
    <property type="entry name" value="ATP-grasp"/>
    <property type="match status" value="1"/>
</dbReference>
<dbReference type="Pfam" id="PF21244">
    <property type="entry name" value="PurT_C"/>
    <property type="match status" value="1"/>
</dbReference>
<dbReference type="Pfam" id="PF22660">
    <property type="entry name" value="RS_preATP-grasp-like"/>
    <property type="match status" value="1"/>
</dbReference>
<dbReference type="SUPFAM" id="SSF56059">
    <property type="entry name" value="Glutathione synthetase ATP-binding domain-like"/>
    <property type="match status" value="1"/>
</dbReference>
<dbReference type="SUPFAM" id="SSF52440">
    <property type="entry name" value="PreATP-grasp domain"/>
    <property type="match status" value="1"/>
</dbReference>
<dbReference type="SUPFAM" id="SSF51246">
    <property type="entry name" value="Rudiment single hybrid motif"/>
    <property type="match status" value="1"/>
</dbReference>
<dbReference type="PROSITE" id="PS50975">
    <property type="entry name" value="ATP_GRASP"/>
    <property type="match status" value="1"/>
</dbReference>
<organism>
    <name type="scientific">Salmonella paratyphi B (strain ATCC BAA-1250 / SPB7)</name>
    <dbReference type="NCBI Taxonomy" id="1016998"/>
    <lineage>
        <taxon>Bacteria</taxon>
        <taxon>Pseudomonadati</taxon>
        <taxon>Pseudomonadota</taxon>
        <taxon>Gammaproteobacteria</taxon>
        <taxon>Enterobacterales</taxon>
        <taxon>Enterobacteriaceae</taxon>
        <taxon>Salmonella</taxon>
    </lineage>
</organism>
<comment type="function">
    <text evidence="1">Involved in the de novo purine biosynthesis. Catalyzes the transfer of formate to 5-phospho-ribosyl-glycinamide (GAR), producing 5-phospho-ribosyl-N-formylglycinamide (FGAR). Formate is provided by PurU via hydrolysis of 10-formyl-tetrahydrofolate.</text>
</comment>
<comment type="catalytic activity">
    <reaction evidence="1">
        <text>N(1)-(5-phospho-beta-D-ribosyl)glycinamide + formate + ATP = N(2)-formyl-N(1)-(5-phospho-beta-D-ribosyl)glycinamide + ADP + phosphate + H(+)</text>
        <dbReference type="Rhea" id="RHEA:24829"/>
        <dbReference type="ChEBI" id="CHEBI:15378"/>
        <dbReference type="ChEBI" id="CHEBI:15740"/>
        <dbReference type="ChEBI" id="CHEBI:30616"/>
        <dbReference type="ChEBI" id="CHEBI:43474"/>
        <dbReference type="ChEBI" id="CHEBI:143788"/>
        <dbReference type="ChEBI" id="CHEBI:147286"/>
        <dbReference type="ChEBI" id="CHEBI:456216"/>
        <dbReference type="EC" id="6.3.1.21"/>
    </reaction>
    <physiologicalReaction direction="left-to-right" evidence="1">
        <dbReference type="Rhea" id="RHEA:24830"/>
    </physiologicalReaction>
</comment>
<comment type="pathway">
    <text evidence="1">Purine metabolism; IMP biosynthesis via de novo pathway; N(2)-formyl-N(1)-(5-phospho-D-ribosyl)glycinamide from N(1)-(5-phospho-D-ribosyl)glycinamide (formate route): step 1/1.</text>
</comment>
<comment type="subunit">
    <text evidence="1">Homodimer.</text>
</comment>
<comment type="similarity">
    <text evidence="1">Belongs to the PurK/PurT family.</text>
</comment>
<accession>A9MUY8</accession>
<proteinExistence type="inferred from homology"/>
<evidence type="ECO:0000255" key="1">
    <source>
        <dbReference type="HAMAP-Rule" id="MF_01643"/>
    </source>
</evidence>